<proteinExistence type="inferred from homology"/>
<comment type="subcellular location">
    <subcellularLocation>
        <location evidence="1">Cytoplasm</location>
    </subcellularLocation>
</comment>
<comment type="similarity">
    <text evidence="1">Belongs to the UPF0298 family.</text>
</comment>
<name>Y1599_STRA1</name>
<protein>
    <recommendedName>
        <fullName evidence="1">UPF0298 protein SAK_1599</fullName>
    </recommendedName>
</protein>
<accession>Q3JZV1</accession>
<organism>
    <name type="scientific">Streptococcus agalactiae serotype Ia (strain ATCC 27591 / A909 / CDC SS700)</name>
    <dbReference type="NCBI Taxonomy" id="205921"/>
    <lineage>
        <taxon>Bacteria</taxon>
        <taxon>Bacillati</taxon>
        <taxon>Bacillota</taxon>
        <taxon>Bacilli</taxon>
        <taxon>Lactobacillales</taxon>
        <taxon>Streptococcaceae</taxon>
        <taxon>Streptococcus</taxon>
    </lineage>
</organism>
<gene>
    <name type="ordered locus">SAK_1599</name>
</gene>
<reference key="1">
    <citation type="journal article" date="2005" name="Proc. Natl. Acad. Sci. U.S.A.">
        <title>Genome analysis of multiple pathogenic isolates of Streptococcus agalactiae: implications for the microbial 'pan-genome'.</title>
        <authorList>
            <person name="Tettelin H."/>
            <person name="Masignani V."/>
            <person name="Cieslewicz M.J."/>
            <person name="Donati C."/>
            <person name="Medini D."/>
            <person name="Ward N.L."/>
            <person name="Angiuoli S.V."/>
            <person name="Crabtree J."/>
            <person name="Jones A.L."/>
            <person name="Durkin A.S."/>
            <person name="DeBoy R.T."/>
            <person name="Davidsen T.M."/>
            <person name="Mora M."/>
            <person name="Scarselli M."/>
            <person name="Margarit y Ros I."/>
            <person name="Peterson J.D."/>
            <person name="Hauser C.R."/>
            <person name="Sundaram J.P."/>
            <person name="Nelson W.C."/>
            <person name="Madupu R."/>
            <person name="Brinkac L.M."/>
            <person name="Dodson R.J."/>
            <person name="Rosovitz M.J."/>
            <person name="Sullivan S.A."/>
            <person name="Daugherty S.C."/>
            <person name="Haft D.H."/>
            <person name="Selengut J."/>
            <person name="Gwinn M.L."/>
            <person name="Zhou L."/>
            <person name="Zafar N."/>
            <person name="Khouri H."/>
            <person name="Radune D."/>
            <person name="Dimitrov G."/>
            <person name="Watkins K."/>
            <person name="O'Connor K.J."/>
            <person name="Smith S."/>
            <person name="Utterback T.R."/>
            <person name="White O."/>
            <person name="Rubens C.E."/>
            <person name="Grandi G."/>
            <person name="Madoff L.C."/>
            <person name="Kasper D.L."/>
            <person name="Telford J.L."/>
            <person name="Wessels M.R."/>
            <person name="Rappuoli R."/>
            <person name="Fraser C.M."/>
        </authorList>
    </citation>
    <scope>NUCLEOTIDE SEQUENCE [LARGE SCALE GENOMIC DNA]</scope>
    <source>
        <strain>ATCC 27591 / A909 / CDC SS700</strain>
    </source>
</reference>
<keyword id="KW-0963">Cytoplasm</keyword>
<dbReference type="EMBL" id="CP000114">
    <property type="protein sequence ID" value="ABA45770.1"/>
    <property type="molecule type" value="Genomic_DNA"/>
</dbReference>
<dbReference type="RefSeq" id="WP_001041186.1">
    <property type="nucleotide sequence ID" value="NC_007432.1"/>
</dbReference>
<dbReference type="SMR" id="Q3JZV1"/>
<dbReference type="KEGG" id="sak:SAK_1599"/>
<dbReference type="HOGENOM" id="CLU_159890_1_0_9"/>
<dbReference type="GO" id="GO:0005737">
    <property type="term" value="C:cytoplasm"/>
    <property type="evidence" value="ECO:0007669"/>
    <property type="project" value="UniProtKB-SubCell"/>
</dbReference>
<dbReference type="HAMAP" id="MF_01126">
    <property type="entry name" value="UPF0298"/>
    <property type="match status" value="1"/>
</dbReference>
<dbReference type="InterPro" id="IPR016979">
    <property type="entry name" value="DUF2129"/>
</dbReference>
<dbReference type="NCBIfam" id="NF002631">
    <property type="entry name" value="PRK02302.1"/>
    <property type="match status" value="1"/>
</dbReference>
<dbReference type="Pfam" id="PF09902">
    <property type="entry name" value="DUF2129"/>
    <property type="match status" value="1"/>
</dbReference>
<dbReference type="PIRSF" id="PIRSF031653">
    <property type="entry name" value="UCP031653"/>
    <property type="match status" value="1"/>
</dbReference>
<evidence type="ECO:0000255" key="1">
    <source>
        <dbReference type="HAMAP-Rule" id="MF_01126"/>
    </source>
</evidence>
<sequence length="81" mass="9862">MNKQERLGMSVYLYYNRDARKLYKYGDVHYHSRRLRYLVIYVNKEDIVSVSKEIKHLKFVKDVRLSAIDDIDQDFVGNLYR</sequence>
<feature type="chain" id="PRO_1000065367" description="UPF0298 protein SAK_1599">
    <location>
        <begin position="1"/>
        <end position="81"/>
    </location>
</feature>